<comment type="function">
    <text evidence="1">With S4 and S12 plays an important role in translational accuracy.</text>
</comment>
<comment type="function">
    <text evidence="1">Located at the back of the 30S subunit body where it stabilizes the conformation of the head with respect to the body.</text>
</comment>
<comment type="subunit">
    <text evidence="1">Part of the 30S ribosomal subunit. Contacts proteins S4 and S8.</text>
</comment>
<comment type="domain">
    <text>The N-terminal domain interacts with the head of the 30S subunit; the C-terminal domain interacts with the body and contacts protein S4. The interaction surface between S4 and S5 is involved in control of translational fidelity.</text>
</comment>
<comment type="similarity">
    <text evidence="1">Belongs to the universal ribosomal protein uS5 family.</text>
</comment>
<keyword id="KW-0687">Ribonucleoprotein</keyword>
<keyword id="KW-0689">Ribosomal protein</keyword>
<keyword id="KW-0694">RNA-binding</keyword>
<keyword id="KW-0699">rRNA-binding</keyword>
<name>RS5_BURO1</name>
<reference key="1">
    <citation type="submission" date="2006-05" db="EMBL/GenBank/DDBJ databases">
        <title>Complete sequence of chromosome 1 of Burkholderia cenocepacia AU 1054.</title>
        <authorList>
            <consortium name="US DOE Joint Genome Institute"/>
            <person name="Copeland A."/>
            <person name="Lucas S."/>
            <person name="Lapidus A."/>
            <person name="Barry K."/>
            <person name="Detter J.C."/>
            <person name="Glavina del Rio T."/>
            <person name="Hammon N."/>
            <person name="Israni S."/>
            <person name="Dalin E."/>
            <person name="Tice H."/>
            <person name="Pitluck S."/>
            <person name="Chain P."/>
            <person name="Malfatti S."/>
            <person name="Shin M."/>
            <person name="Vergez L."/>
            <person name="Schmutz J."/>
            <person name="Larimer F."/>
            <person name="Land M."/>
            <person name="Hauser L."/>
            <person name="Kyrpides N."/>
            <person name="Lykidis A."/>
            <person name="LiPuma J.J."/>
            <person name="Konstantinidis K."/>
            <person name="Tiedje J.M."/>
            <person name="Richardson P."/>
        </authorList>
    </citation>
    <scope>NUCLEOTIDE SEQUENCE [LARGE SCALE GENOMIC DNA]</scope>
    <source>
        <strain>AU 1054</strain>
    </source>
</reference>
<protein>
    <recommendedName>
        <fullName evidence="1">Small ribosomal subunit protein uS5</fullName>
    </recommendedName>
    <alternativeName>
        <fullName evidence="2">30S ribosomal protein S5</fullName>
    </alternativeName>
</protein>
<organism>
    <name type="scientific">Burkholderia orbicola (strain AU 1054)</name>
    <dbReference type="NCBI Taxonomy" id="331271"/>
    <lineage>
        <taxon>Bacteria</taxon>
        <taxon>Pseudomonadati</taxon>
        <taxon>Pseudomonadota</taxon>
        <taxon>Betaproteobacteria</taxon>
        <taxon>Burkholderiales</taxon>
        <taxon>Burkholderiaceae</taxon>
        <taxon>Burkholderia</taxon>
        <taxon>Burkholderia cepacia complex</taxon>
        <taxon>Burkholderia orbicola</taxon>
    </lineage>
</organism>
<proteinExistence type="inferred from homology"/>
<feature type="chain" id="PRO_0000323084" description="Small ribosomal subunit protein uS5">
    <location>
        <begin position="1"/>
        <end position="172"/>
    </location>
</feature>
<feature type="domain" description="S5 DRBM" evidence="1">
    <location>
        <begin position="17"/>
        <end position="80"/>
    </location>
</feature>
<evidence type="ECO:0000255" key="1">
    <source>
        <dbReference type="HAMAP-Rule" id="MF_01307"/>
    </source>
</evidence>
<evidence type="ECO:0000305" key="2"/>
<sequence>MAKMQAKVQADERDDGLREKMISVNRVTKVVKGGRILGFAALTVVGDGDGRIGMGKGKAKEVPVAVQKAMEQARRNMFKVPLKNGTLQHEVHGKHGASAVLLAPAKAGTGVIAGGPMRAVFDVMGVQNVVAKSHGSTNPYNLVRATLDGLRKQSTPADIAAKRGKSVEDILG</sequence>
<accession>Q1BRW5</accession>
<gene>
    <name evidence="1" type="primary">rpsE</name>
    <name type="ordered locus">Bcen_2742</name>
</gene>
<dbReference type="EMBL" id="CP000378">
    <property type="protein sequence ID" value="ABF77640.1"/>
    <property type="molecule type" value="Genomic_DNA"/>
</dbReference>
<dbReference type="SMR" id="Q1BRW5"/>
<dbReference type="HOGENOM" id="CLU_065898_2_2_4"/>
<dbReference type="GO" id="GO:0015935">
    <property type="term" value="C:small ribosomal subunit"/>
    <property type="evidence" value="ECO:0007669"/>
    <property type="project" value="InterPro"/>
</dbReference>
<dbReference type="GO" id="GO:0019843">
    <property type="term" value="F:rRNA binding"/>
    <property type="evidence" value="ECO:0007669"/>
    <property type="project" value="UniProtKB-UniRule"/>
</dbReference>
<dbReference type="GO" id="GO:0003735">
    <property type="term" value="F:structural constituent of ribosome"/>
    <property type="evidence" value="ECO:0007669"/>
    <property type="project" value="InterPro"/>
</dbReference>
<dbReference type="GO" id="GO:0006412">
    <property type="term" value="P:translation"/>
    <property type="evidence" value="ECO:0007669"/>
    <property type="project" value="UniProtKB-UniRule"/>
</dbReference>
<dbReference type="FunFam" id="3.30.160.20:FF:000001">
    <property type="entry name" value="30S ribosomal protein S5"/>
    <property type="match status" value="1"/>
</dbReference>
<dbReference type="FunFam" id="3.30.230.10:FF:000002">
    <property type="entry name" value="30S ribosomal protein S5"/>
    <property type="match status" value="1"/>
</dbReference>
<dbReference type="Gene3D" id="3.30.160.20">
    <property type="match status" value="1"/>
</dbReference>
<dbReference type="Gene3D" id="3.30.230.10">
    <property type="match status" value="1"/>
</dbReference>
<dbReference type="HAMAP" id="MF_01307_B">
    <property type="entry name" value="Ribosomal_uS5_B"/>
    <property type="match status" value="1"/>
</dbReference>
<dbReference type="InterPro" id="IPR020568">
    <property type="entry name" value="Ribosomal_Su5_D2-typ_SF"/>
</dbReference>
<dbReference type="InterPro" id="IPR000851">
    <property type="entry name" value="Ribosomal_uS5"/>
</dbReference>
<dbReference type="InterPro" id="IPR005712">
    <property type="entry name" value="Ribosomal_uS5_bac-type"/>
</dbReference>
<dbReference type="InterPro" id="IPR005324">
    <property type="entry name" value="Ribosomal_uS5_C"/>
</dbReference>
<dbReference type="InterPro" id="IPR013810">
    <property type="entry name" value="Ribosomal_uS5_N"/>
</dbReference>
<dbReference type="InterPro" id="IPR018192">
    <property type="entry name" value="Ribosomal_uS5_N_CS"/>
</dbReference>
<dbReference type="InterPro" id="IPR014721">
    <property type="entry name" value="Ribsml_uS5_D2-typ_fold_subgr"/>
</dbReference>
<dbReference type="NCBIfam" id="TIGR01021">
    <property type="entry name" value="rpsE_bact"/>
    <property type="match status" value="1"/>
</dbReference>
<dbReference type="PANTHER" id="PTHR48277">
    <property type="entry name" value="MITOCHONDRIAL RIBOSOMAL PROTEIN S5"/>
    <property type="match status" value="1"/>
</dbReference>
<dbReference type="PANTHER" id="PTHR48277:SF1">
    <property type="entry name" value="MITOCHONDRIAL RIBOSOMAL PROTEIN S5"/>
    <property type="match status" value="1"/>
</dbReference>
<dbReference type="Pfam" id="PF00333">
    <property type="entry name" value="Ribosomal_S5"/>
    <property type="match status" value="1"/>
</dbReference>
<dbReference type="Pfam" id="PF03719">
    <property type="entry name" value="Ribosomal_S5_C"/>
    <property type="match status" value="1"/>
</dbReference>
<dbReference type="SUPFAM" id="SSF54768">
    <property type="entry name" value="dsRNA-binding domain-like"/>
    <property type="match status" value="1"/>
</dbReference>
<dbReference type="SUPFAM" id="SSF54211">
    <property type="entry name" value="Ribosomal protein S5 domain 2-like"/>
    <property type="match status" value="1"/>
</dbReference>
<dbReference type="PROSITE" id="PS00585">
    <property type="entry name" value="RIBOSOMAL_S5"/>
    <property type="match status" value="1"/>
</dbReference>
<dbReference type="PROSITE" id="PS50881">
    <property type="entry name" value="S5_DSRBD"/>
    <property type="match status" value="1"/>
</dbReference>